<feature type="chain" id="PRO_0000168289" description="Dihydroneopterin aldolase">
    <location>
        <begin position="1"/>
        <end position="119"/>
    </location>
</feature>
<feature type="active site" description="Proton donor/acceptor" evidence="1">
    <location>
        <position position="99"/>
    </location>
</feature>
<feature type="binding site" evidence="1">
    <location>
        <position position="21"/>
    </location>
    <ligand>
        <name>substrate</name>
    </ligand>
</feature>
<feature type="binding site" evidence="1">
    <location>
        <position position="53"/>
    </location>
    <ligand>
        <name>substrate</name>
    </ligand>
</feature>
<feature type="binding site" evidence="1">
    <location>
        <begin position="72"/>
        <end position="73"/>
    </location>
    <ligand>
        <name>substrate</name>
    </ligand>
</feature>
<evidence type="ECO:0000250" key="1">
    <source>
        <dbReference type="UniProtKB" id="P0AC16"/>
    </source>
</evidence>
<evidence type="ECO:0000305" key="2"/>
<comment type="function">
    <text evidence="1">Catalyzes the conversion of 7,8-dihydroneopterin to 6-hydroxymethyl-7,8-dihydropterin.</text>
</comment>
<comment type="catalytic activity">
    <reaction evidence="1">
        <text>7,8-dihydroneopterin = 6-hydroxymethyl-7,8-dihydropterin + glycolaldehyde</text>
        <dbReference type="Rhea" id="RHEA:10540"/>
        <dbReference type="ChEBI" id="CHEBI:17001"/>
        <dbReference type="ChEBI" id="CHEBI:17071"/>
        <dbReference type="ChEBI" id="CHEBI:44841"/>
        <dbReference type="EC" id="4.1.2.25"/>
    </reaction>
</comment>
<comment type="pathway">
    <text>Cofactor biosynthesis; tetrahydrofolate biosynthesis; 2-amino-4-hydroxy-6-hydroxymethyl-7,8-dihydropteridine diphosphate from 7,8-dihydroneopterin triphosphate: step 3/4.</text>
</comment>
<comment type="similarity">
    <text evidence="2">Belongs to the DHNA family.</text>
</comment>
<organism>
    <name type="scientific">Streptococcus pyogenes serotype M1</name>
    <dbReference type="NCBI Taxonomy" id="301447"/>
    <lineage>
        <taxon>Bacteria</taxon>
        <taxon>Bacillati</taxon>
        <taxon>Bacillota</taxon>
        <taxon>Bacilli</taxon>
        <taxon>Lactobacillales</taxon>
        <taxon>Streptococcaceae</taxon>
        <taxon>Streptococcus</taxon>
    </lineage>
</organism>
<keyword id="KW-0289">Folate biosynthesis</keyword>
<keyword id="KW-0456">Lyase</keyword>
<keyword id="KW-1185">Reference proteome</keyword>
<name>FOLB_STRP1</name>
<reference key="1">
    <citation type="journal article" date="2001" name="Proc. Natl. Acad. Sci. U.S.A.">
        <title>Complete genome sequence of an M1 strain of Streptococcus pyogenes.</title>
        <authorList>
            <person name="Ferretti J.J."/>
            <person name="McShan W.M."/>
            <person name="Ajdic D.J."/>
            <person name="Savic D.J."/>
            <person name="Savic G."/>
            <person name="Lyon K."/>
            <person name="Primeaux C."/>
            <person name="Sezate S."/>
            <person name="Suvorov A.N."/>
            <person name="Kenton S."/>
            <person name="Lai H.S."/>
            <person name="Lin S.P."/>
            <person name="Qian Y."/>
            <person name="Jia H.G."/>
            <person name="Najar F.Z."/>
            <person name="Ren Q."/>
            <person name="Zhu H."/>
            <person name="Song L."/>
            <person name="White J."/>
            <person name="Yuan X."/>
            <person name="Clifton S.W."/>
            <person name="Roe B.A."/>
            <person name="McLaughlin R.E."/>
        </authorList>
    </citation>
    <scope>NUCLEOTIDE SEQUENCE [LARGE SCALE GENOMIC DNA]</scope>
    <source>
        <strain>ATCC 700294 / SF370 / Serotype M1</strain>
    </source>
</reference>
<reference key="2">
    <citation type="journal article" date="2005" name="J. Infect. Dis.">
        <title>Evolutionary origin and emergence of a highly successful clone of serotype M1 group A Streptococcus involved multiple horizontal gene transfer events.</title>
        <authorList>
            <person name="Sumby P."/>
            <person name="Porcella S.F."/>
            <person name="Madrigal A.G."/>
            <person name="Barbian K.D."/>
            <person name="Virtaneva K."/>
            <person name="Ricklefs S.M."/>
            <person name="Sturdevant D.E."/>
            <person name="Graham M.R."/>
            <person name="Vuopio-Varkila J."/>
            <person name="Hoe N.P."/>
            <person name="Musser J.M."/>
        </authorList>
    </citation>
    <scope>NUCLEOTIDE SEQUENCE [LARGE SCALE GENOMIC DNA]</scope>
    <source>
        <strain>ATCC BAA-947 / MGAS5005 / Serotype M1</strain>
    </source>
</reference>
<gene>
    <name type="primary">folB</name>
    <name type="synonym">folQ</name>
    <name type="ordered locus">SPy_1099</name>
    <name type="ordered locus">M5005_Spy0823</name>
</gene>
<sequence>MDKIVLEGCRFYGYHGAFKEEQTLGQIFLVDLELSVDLQAASLSDQLTDTVHYGMVFDSVRQLVEGEKFILIERLAGAICEQLFNEFPPIEAIKVAIKKENPPIAGHYKAVGIELERQR</sequence>
<proteinExistence type="inferred from homology"/>
<accession>P0C0G5</accession>
<accession>O33725</accession>
<accession>P0A3E1</accession>
<accession>Q48YY1</accession>
<dbReference type="EC" id="4.1.2.25"/>
<dbReference type="EMBL" id="AE004092">
    <property type="protein sequence ID" value="AAK33977.1"/>
    <property type="molecule type" value="Genomic_DNA"/>
</dbReference>
<dbReference type="EMBL" id="CP000017">
    <property type="protein sequence ID" value="AAZ51441.1"/>
    <property type="molecule type" value="Genomic_DNA"/>
</dbReference>
<dbReference type="RefSeq" id="NP_269256.1">
    <property type="nucleotide sequence ID" value="NC_002737.2"/>
</dbReference>
<dbReference type="SMR" id="P0C0G5"/>
<dbReference type="PaxDb" id="1314-HKU360_00888"/>
<dbReference type="KEGG" id="spy:SPy_1099"/>
<dbReference type="KEGG" id="spz:M5005_Spy0823"/>
<dbReference type="PATRIC" id="fig|160490.10.peg.955"/>
<dbReference type="HOGENOM" id="CLU_112632_1_3_9"/>
<dbReference type="OMA" id="GHYKSVA"/>
<dbReference type="UniPathway" id="UPA00077">
    <property type="reaction ID" value="UER00154"/>
</dbReference>
<dbReference type="Proteomes" id="UP000000750">
    <property type="component" value="Chromosome"/>
</dbReference>
<dbReference type="GO" id="GO:0005737">
    <property type="term" value="C:cytoplasm"/>
    <property type="evidence" value="ECO:0007669"/>
    <property type="project" value="TreeGrafter"/>
</dbReference>
<dbReference type="GO" id="GO:0004150">
    <property type="term" value="F:dihydroneopterin aldolase activity"/>
    <property type="evidence" value="ECO:0007669"/>
    <property type="project" value="UniProtKB-EC"/>
</dbReference>
<dbReference type="GO" id="GO:0046656">
    <property type="term" value="P:folic acid biosynthetic process"/>
    <property type="evidence" value="ECO:0007669"/>
    <property type="project" value="UniProtKB-KW"/>
</dbReference>
<dbReference type="GO" id="GO:0046654">
    <property type="term" value="P:tetrahydrofolate biosynthetic process"/>
    <property type="evidence" value="ECO:0007669"/>
    <property type="project" value="UniProtKB-UniPathway"/>
</dbReference>
<dbReference type="CDD" id="cd00534">
    <property type="entry name" value="DHNA_DHNTPE"/>
    <property type="match status" value="1"/>
</dbReference>
<dbReference type="FunFam" id="3.30.1130.10:FF:000003">
    <property type="entry name" value="7,8-dihydroneopterin aldolase"/>
    <property type="match status" value="1"/>
</dbReference>
<dbReference type="Gene3D" id="3.30.1130.10">
    <property type="match status" value="1"/>
</dbReference>
<dbReference type="InterPro" id="IPR006156">
    <property type="entry name" value="Dihydroneopterin_aldolase"/>
</dbReference>
<dbReference type="InterPro" id="IPR006157">
    <property type="entry name" value="FolB_dom"/>
</dbReference>
<dbReference type="InterPro" id="IPR043133">
    <property type="entry name" value="GTP-CH-I_C/QueF"/>
</dbReference>
<dbReference type="NCBIfam" id="TIGR00525">
    <property type="entry name" value="folB"/>
    <property type="match status" value="1"/>
</dbReference>
<dbReference type="NCBIfam" id="TIGR00526">
    <property type="entry name" value="folB_dom"/>
    <property type="match status" value="1"/>
</dbReference>
<dbReference type="PANTHER" id="PTHR42844">
    <property type="entry name" value="DIHYDRONEOPTERIN ALDOLASE 1-RELATED"/>
    <property type="match status" value="1"/>
</dbReference>
<dbReference type="PANTHER" id="PTHR42844:SF1">
    <property type="entry name" value="DIHYDRONEOPTERIN ALDOLASE 1-RELATED"/>
    <property type="match status" value="1"/>
</dbReference>
<dbReference type="Pfam" id="PF02152">
    <property type="entry name" value="FolB"/>
    <property type="match status" value="1"/>
</dbReference>
<dbReference type="SMART" id="SM00905">
    <property type="entry name" value="FolB"/>
    <property type="match status" value="1"/>
</dbReference>
<dbReference type="SUPFAM" id="SSF55620">
    <property type="entry name" value="Tetrahydrobiopterin biosynthesis enzymes-like"/>
    <property type="match status" value="1"/>
</dbReference>
<protein>
    <recommendedName>
        <fullName>Dihydroneopterin aldolase</fullName>
        <shortName>DHNA</shortName>
        <ecNumber>4.1.2.25</ecNumber>
    </recommendedName>
    <alternativeName>
        <fullName>7,8-dihydroneopterin aldolase</fullName>
    </alternativeName>
</protein>